<sequence>MASNSSSCPTPGGGHLNGYPVTPYAFFFPHMLGGLSPPSSLPGIQHQLPVSGYSTPSPATVETQSTSSEEIVPSPPSPPPLPRIYKPCFVCQDKSSGYHYGVSACEGCKGFFRRSIQKNMVYTCHRDKNCIINKVTRNRCQYCRLQKCFEVGMSKESVRNDRNKKKKDVPKTECSESYIVTPEVEELIEKVRKAHQETFPALCQLGKYTTNNSSEQRVSLDIDLWDKFSELSTKCIIKTVEFAKQLPGFTTLTIADQITLLKAACLDILILRICTRYTPEQDTMTFSDGLTLNRTQMHNAGFGPLTDLVFAFANQLLPLEMDDAETGLLSAICLICGDRQDLEQPDKVDKLQEPLLEALKIYVRKRRPNKPHMFPKMLMKITDLRSISAKGAERVITLKMEIPGSMPPLIQEMLENSEGMDTLGGQPGGPRTGGLGPPPGSCSPSLSPSSTRSSPATHSP</sequence>
<gene>
    <name type="primary">RARA</name>
    <name type="synonym">NR1B1</name>
</gene>
<reference key="1">
    <citation type="journal article" date="1995" name="Int. J. Dev. Biol.">
        <title>Characterization of cDNAs encoding two chick retinoic acid receptor alpha isoforms and distribution of retinoic acid receptor alpha, beta and gamma transcripts during chick skin development.</title>
        <authorList>
            <person name="Michaille J.J."/>
            <person name="Kanzler B."/>
            <person name="Blanchet S."/>
            <person name="Garnier J.-M."/>
            <person name="Dhouailly D."/>
        </authorList>
    </citation>
    <scope>NUCLEOTIDE SEQUENCE [MRNA] (ISOFORMS ALPHA-1 AND ALPHA-2)</scope>
    <scope>TISSUE SPECIFICITY</scope>
    <scope>DEVELOPMENTAL STAGE</scope>
</reference>
<reference key="2">
    <citation type="journal article" date="2001" name="Development">
        <title>Hindbrain patterning involves graded responses to retinoic acid signalling.</title>
        <authorList>
            <person name="Dupe V."/>
            <person name="Lumsden A."/>
        </authorList>
    </citation>
    <scope>FUNCTION</scope>
</reference>
<feature type="chain" id="PRO_0000053463" description="Retinoic acid receptor alpha">
    <location>
        <begin position="1"/>
        <end position="460"/>
    </location>
</feature>
<feature type="domain" description="NR LBD" evidence="4">
    <location>
        <begin position="183"/>
        <end position="417"/>
    </location>
</feature>
<feature type="DNA-binding region" description="Nuclear receptor" evidence="3">
    <location>
        <begin position="88"/>
        <end position="153"/>
    </location>
</feature>
<feature type="zinc finger region" description="NR C4-type" evidence="3">
    <location>
        <begin position="88"/>
        <end position="108"/>
    </location>
</feature>
<feature type="zinc finger region" description="NR C4-type" evidence="3">
    <location>
        <begin position="124"/>
        <end position="148"/>
    </location>
</feature>
<feature type="region of interest" description="Modulating">
    <location>
        <begin position="1"/>
        <end position="87"/>
    </location>
</feature>
<feature type="region of interest" description="Disordered" evidence="5">
    <location>
        <begin position="46"/>
        <end position="78"/>
    </location>
</feature>
<feature type="region of interest" description="Hinge">
    <location>
        <begin position="154"/>
        <end position="182"/>
    </location>
</feature>
<feature type="region of interest" description="Disordered" evidence="5">
    <location>
        <begin position="418"/>
        <end position="460"/>
    </location>
</feature>
<feature type="short sequence motif" description="9aaTAD" evidence="2">
    <location>
        <begin position="408"/>
        <end position="416"/>
    </location>
</feature>
<feature type="compositionally biased region" description="Polar residues" evidence="5">
    <location>
        <begin position="52"/>
        <end position="69"/>
    </location>
</feature>
<feature type="compositionally biased region" description="Gly residues" evidence="5">
    <location>
        <begin position="425"/>
        <end position="435"/>
    </location>
</feature>
<feature type="compositionally biased region" description="Low complexity" evidence="5">
    <location>
        <begin position="442"/>
        <end position="460"/>
    </location>
</feature>
<feature type="splice variant" id="VSP_003631" description="In isoform Alpha-2." evidence="8">
    <original>MASNSSSCPTPGGGHLNGYPVTPYAFFFPHMLGGLSPPSSLPGIQHQLPVSGYSTPSPAT</original>
    <variation>MFEGAEVAGLPPPGPLPRMDCCGPGRGCLLPQCPPPPRTAPRRAPHWGASGRS</variation>
    <location>
        <begin position="1"/>
        <end position="60"/>
    </location>
</feature>
<name>RARA_CHICK</name>
<protein>
    <recommendedName>
        <fullName>Retinoic acid receptor alpha</fullName>
        <shortName>RAR-alpha</shortName>
    </recommendedName>
    <alternativeName>
        <fullName>Nuclear receptor subfamily 1 group B member 1</fullName>
    </alternativeName>
</protein>
<dbReference type="EMBL" id="X73972">
    <property type="protein sequence ID" value="CAA52152.1"/>
    <property type="molecule type" value="mRNA"/>
</dbReference>
<dbReference type="EMBL" id="X78335">
    <property type="protein sequence ID" value="CAA55134.1"/>
    <property type="molecule type" value="mRNA"/>
</dbReference>
<dbReference type="PIR" id="I50674">
    <property type="entry name" value="I50674"/>
</dbReference>
<dbReference type="RefSeq" id="NP_989867.1">
    <molecule id="Q90966-1"/>
    <property type="nucleotide sequence ID" value="NM_204536.1"/>
</dbReference>
<dbReference type="SMR" id="Q90966"/>
<dbReference type="FunCoup" id="Q90966">
    <property type="interactions" value="1309"/>
</dbReference>
<dbReference type="STRING" id="9031.ENSGALP00000047963"/>
<dbReference type="GlyGen" id="Q90966">
    <property type="glycosylation" value="2 sites"/>
</dbReference>
<dbReference type="PaxDb" id="9031-ENSGALP00000009016"/>
<dbReference type="GeneID" id="395213"/>
<dbReference type="KEGG" id="gga:395213"/>
<dbReference type="CTD" id="5914"/>
<dbReference type="VEuPathDB" id="HostDB:geneid_395213"/>
<dbReference type="eggNOG" id="KOG3575">
    <property type="taxonomic scope" value="Eukaryota"/>
</dbReference>
<dbReference type="InParanoid" id="Q90966"/>
<dbReference type="OMA" id="CHTRAPT"/>
<dbReference type="OrthoDB" id="6081310at2759"/>
<dbReference type="PhylomeDB" id="Q90966"/>
<dbReference type="Reactome" id="R-GGA-383280">
    <property type="pathway name" value="Nuclear Receptor transcription pathway"/>
</dbReference>
<dbReference type="Reactome" id="R-GGA-4090294">
    <property type="pathway name" value="SUMOylation of intracellular receptors"/>
</dbReference>
<dbReference type="Reactome" id="R-GGA-5362517">
    <property type="pathway name" value="Signaling by Retinoic Acid"/>
</dbReference>
<dbReference type="Reactome" id="R-GGA-9616222">
    <property type="pathway name" value="Transcriptional regulation of granulopoiesis"/>
</dbReference>
<dbReference type="PRO" id="PR:Q90966"/>
<dbReference type="Proteomes" id="UP000000539">
    <property type="component" value="Chromosome 27"/>
</dbReference>
<dbReference type="Bgee" id="ENSGALG00000037935">
    <property type="expression patterns" value="Expressed in granulocyte and 13 other cell types or tissues"/>
</dbReference>
<dbReference type="GO" id="GO:0005634">
    <property type="term" value="C:nucleus"/>
    <property type="evidence" value="ECO:0000318"/>
    <property type="project" value="GO_Central"/>
</dbReference>
<dbReference type="GO" id="GO:0004879">
    <property type="term" value="F:nuclear receptor activity"/>
    <property type="evidence" value="ECO:0000318"/>
    <property type="project" value="GO_Central"/>
</dbReference>
<dbReference type="GO" id="GO:0000978">
    <property type="term" value="F:RNA polymerase II cis-regulatory region sequence-specific DNA binding"/>
    <property type="evidence" value="ECO:0000318"/>
    <property type="project" value="GO_Central"/>
</dbReference>
<dbReference type="GO" id="GO:0008270">
    <property type="term" value="F:zinc ion binding"/>
    <property type="evidence" value="ECO:0007669"/>
    <property type="project" value="UniProtKB-KW"/>
</dbReference>
<dbReference type="GO" id="GO:0030154">
    <property type="term" value="P:cell differentiation"/>
    <property type="evidence" value="ECO:0000318"/>
    <property type="project" value="GO_Central"/>
</dbReference>
<dbReference type="GO" id="GO:0021575">
    <property type="term" value="P:hindbrain morphogenesis"/>
    <property type="evidence" value="ECO:0000314"/>
    <property type="project" value="UniProtKB"/>
</dbReference>
<dbReference type="GO" id="GO:0000122">
    <property type="term" value="P:negative regulation of transcription by RNA polymerase II"/>
    <property type="evidence" value="ECO:0000318"/>
    <property type="project" value="GO_Central"/>
</dbReference>
<dbReference type="GO" id="GO:0045944">
    <property type="term" value="P:positive regulation of transcription by RNA polymerase II"/>
    <property type="evidence" value="ECO:0000318"/>
    <property type="project" value="GO_Central"/>
</dbReference>
<dbReference type="GO" id="GO:0032526">
    <property type="term" value="P:response to retinoic acid"/>
    <property type="evidence" value="ECO:0000314"/>
    <property type="project" value="UniProtKB"/>
</dbReference>
<dbReference type="GO" id="GO:0048384">
    <property type="term" value="P:retinoic acid receptor signaling pathway"/>
    <property type="evidence" value="ECO:0000318"/>
    <property type="project" value="GO_Central"/>
</dbReference>
<dbReference type="CDD" id="cd06964">
    <property type="entry name" value="NR_DBD_RAR"/>
    <property type="match status" value="1"/>
</dbReference>
<dbReference type="CDD" id="cd06937">
    <property type="entry name" value="NR_LBD_RAR"/>
    <property type="match status" value="1"/>
</dbReference>
<dbReference type="FunFam" id="1.10.565.10:FF:000073">
    <property type="entry name" value="Retinoic acid receptor beta"/>
    <property type="match status" value="1"/>
</dbReference>
<dbReference type="FunFam" id="3.30.50.10:FF:000004">
    <property type="entry name" value="Retinoic acid receptor beta isoform"/>
    <property type="match status" value="1"/>
</dbReference>
<dbReference type="Gene3D" id="3.30.50.10">
    <property type="entry name" value="Erythroid Transcription Factor GATA-1, subunit A"/>
    <property type="match status" value="1"/>
</dbReference>
<dbReference type="Gene3D" id="1.10.565.10">
    <property type="entry name" value="Retinoid X Receptor"/>
    <property type="match status" value="1"/>
</dbReference>
<dbReference type="InterPro" id="IPR035500">
    <property type="entry name" value="NHR-like_dom_sf"/>
</dbReference>
<dbReference type="InterPro" id="IPR047159">
    <property type="entry name" value="NR_DBD_RAR"/>
</dbReference>
<dbReference type="InterPro" id="IPR047158">
    <property type="entry name" value="NR_LBD_RAR"/>
</dbReference>
<dbReference type="InterPro" id="IPR000536">
    <property type="entry name" value="Nucl_hrmn_rcpt_lig-bd"/>
</dbReference>
<dbReference type="InterPro" id="IPR001723">
    <property type="entry name" value="Nuclear_hrmn_rcpt"/>
</dbReference>
<dbReference type="InterPro" id="IPR003078">
    <property type="entry name" value="Retinoic_acid_rcpt"/>
</dbReference>
<dbReference type="InterPro" id="IPR001628">
    <property type="entry name" value="Znf_hrmn_rcpt"/>
</dbReference>
<dbReference type="InterPro" id="IPR013088">
    <property type="entry name" value="Znf_NHR/GATA"/>
</dbReference>
<dbReference type="PANTHER" id="PTHR24085">
    <property type="entry name" value="NUCLEAR HORMONE RECEPTOR"/>
    <property type="match status" value="1"/>
</dbReference>
<dbReference type="PANTHER" id="PTHR24085:SF8">
    <property type="entry name" value="RETINOIC ACID RECEPTOR ALPHA"/>
    <property type="match status" value="1"/>
</dbReference>
<dbReference type="Pfam" id="PF00104">
    <property type="entry name" value="Hormone_recep"/>
    <property type="match status" value="1"/>
</dbReference>
<dbReference type="Pfam" id="PF00105">
    <property type="entry name" value="zf-C4"/>
    <property type="match status" value="1"/>
</dbReference>
<dbReference type="PRINTS" id="PR01292">
    <property type="entry name" value="RETNOICACIDR"/>
</dbReference>
<dbReference type="PRINTS" id="PR00398">
    <property type="entry name" value="STRDHORMONER"/>
</dbReference>
<dbReference type="PRINTS" id="PR00047">
    <property type="entry name" value="STROIDFINGER"/>
</dbReference>
<dbReference type="SMART" id="SM00430">
    <property type="entry name" value="HOLI"/>
    <property type="match status" value="1"/>
</dbReference>
<dbReference type="SMART" id="SM00399">
    <property type="entry name" value="ZnF_C4"/>
    <property type="match status" value="1"/>
</dbReference>
<dbReference type="SUPFAM" id="SSF57716">
    <property type="entry name" value="Glucocorticoid receptor-like (DNA-binding domain)"/>
    <property type="match status" value="1"/>
</dbReference>
<dbReference type="SUPFAM" id="SSF48508">
    <property type="entry name" value="Nuclear receptor ligand-binding domain"/>
    <property type="match status" value="1"/>
</dbReference>
<dbReference type="PROSITE" id="PS51843">
    <property type="entry name" value="NR_LBD"/>
    <property type="match status" value="1"/>
</dbReference>
<dbReference type="PROSITE" id="PS00031">
    <property type="entry name" value="NUCLEAR_REC_DBD_1"/>
    <property type="match status" value="1"/>
</dbReference>
<dbReference type="PROSITE" id="PS51030">
    <property type="entry name" value="NUCLEAR_REC_DBD_2"/>
    <property type="match status" value="1"/>
</dbReference>
<proteinExistence type="evidence at transcript level"/>
<evidence type="ECO:0000250" key="1"/>
<evidence type="ECO:0000250" key="2">
    <source>
        <dbReference type="UniProtKB" id="P10276"/>
    </source>
</evidence>
<evidence type="ECO:0000255" key="3">
    <source>
        <dbReference type="PROSITE-ProRule" id="PRU00407"/>
    </source>
</evidence>
<evidence type="ECO:0000255" key="4">
    <source>
        <dbReference type="PROSITE-ProRule" id="PRU01189"/>
    </source>
</evidence>
<evidence type="ECO:0000256" key="5">
    <source>
        <dbReference type="SAM" id="MobiDB-lite"/>
    </source>
</evidence>
<evidence type="ECO:0000269" key="6">
    <source>
    </source>
</evidence>
<evidence type="ECO:0000269" key="7">
    <source>
    </source>
</evidence>
<evidence type="ECO:0000303" key="8">
    <source>
    </source>
</evidence>
<evidence type="ECO:0000305" key="9"/>
<comment type="function">
    <text evidence="1 6">Receptor for retinoic acid. Retinoic acid receptors bind as heterodimers to their target response elements in response to their ligands, all-trans or 9-cis retinoic acid, and regulate gene expression in various biological processes. The RAR/RXR heterodimers bind to the retinoic acid response elements (RARE) composed of tandem 5'-AGGTCA-3' sites known as DR1-DR5 (By similarity). Required for hindbrain patterning and appears to be required for skin development.</text>
</comment>
<comment type="subunit">
    <text evidence="1">Heterodimer; with an RXR molecule. Binds DNA preferentially as a RAR/RXR heterodimer.</text>
</comment>
<comment type="subcellular location">
    <subcellularLocation>
        <location evidence="3">Nucleus</location>
    </subcellularLocation>
</comment>
<comment type="alternative products">
    <event type="alternative splicing"/>
    <isoform>
        <id>Q90966-1</id>
        <name>Alpha-1</name>
        <sequence type="displayed"/>
    </isoform>
    <isoform>
        <id>Q90966-2</id>
        <name>Alpha-2</name>
        <sequence type="described" ref="VSP_003631"/>
    </isoform>
</comment>
<comment type="tissue specificity">
    <text evidence="7">Ubiquitous.</text>
</comment>
<comment type="developmental stage">
    <text evidence="7">Expressed from day 7-8.5 during feather morphogenesis in dermal and epidermal cells. Also expressed in heart from day 8.5-14.5. At later stages, when the feather follicle forms, expression still abundant in the epidermis, especially in the feather barb ridges.</text>
</comment>
<comment type="domain">
    <text>Composed of three domains: a modulating N-terminal domain, a DNA-binding domain and a C-terminal ligand-binding domain.</text>
</comment>
<comment type="domain">
    <text evidence="2">The 9aaTAD motif is a transactivation domain present in a large number of yeast and animal transcription factors.</text>
</comment>
<comment type="similarity">
    <text evidence="9">Belongs to the nuclear hormone receptor family. NR1 subfamily.</text>
</comment>
<keyword id="KW-0025">Alternative splicing</keyword>
<keyword id="KW-0238">DNA-binding</keyword>
<keyword id="KW-0479">Metal-binding</keyword>
<keyword id="KW-0539">Nucleus</keyword>
<keyword id="KW-0675">Receptor</keyword>
<keyword id="KW-1185">Reference proteome</keyword>
<keyword id="KW-0804">Transcription</keyword>
<keyword id="KW-0805">Transcription regulation</keyword>
<keyword id="KW-0862">Zinc</keyword>
<keyword id="KW-0863">Zinc-finger</keyword>
<accession>Q90966</accession>
<accession>Q90967</accession>
<organism>
    <name type="scientific">Gallus gallus</name>
    <name type="common">Chicken</name>
    <dbReference type="NCBI Taxonomy" id="9031"/>
    <lineage>
        <taxon>Eukaryota</taxon>
        <taxon>Metazoa</taxon>
        <taxon>Chordata</taxon>
        <taxon>Craniata</taxon>
        <taxon>Vertebrata</taxon>
        <taxon>Euteleostomi</taxon>
        <taxon>Archelosauria</taxon>
        <taxon>Archosauria</taxon>
        <taxon>Dinosauria</taxon>
        <taxon>Saurischia</taxon>
        <taxon>Theropoda</taxon>
        <taxon>Coelurosauria</taxon>
        <taxon>Aves</taxon>
        <taxon>Neognathae</taxon>
        <taxon>Galloanserae</taxon>
        <taxon>Galliformes</taxon>
        <taxon>Phasianidae</taxon>
        <taxon>Phasianinae</taxon>
        <taxon>Gallus</taxon>
    </lineage>
</organism>